<protein>
    <recommendedName>
        <fullName evidence="1">Large ribosomal subunit protein bL35</fullName>
    </recommendedName>
    <alternativeName>
        <fullName evidence="2">50S ribosomal protein L35</fullName>
    </alternativeName>
</protein>
<proteinExistence type="inferred from homology"/>
<name>RL35_ALIB4</name>
<comment type="similarity">
    <text evidence="1">Belongs to the bacterial ribosomal protein bL35 family.</text>
</comment>
<dbReference type="EMBL" id="CP000361">
    <property type="protein sequence ID" value="ABV66358.1"/>
    <property type="molecule type" value="Genomic_DNA"/>
</dbReference>
<dbReference type="RefSeq" id="WP_004510116.1">
    <property type="nucleotide sequence ID" value="NC_009850.1"/>
</dbReference>
<dbReference type="SMR" id="A8EQY4"/>
<dbReference type="STRING" id="367737.Abu_0073"/>
<dbReference type="GeneID" id="24303966"/>
<dbReference type="KEGG" id="abu:Abu_0073"/>
<dbReference type="eggNOG" id="COG0291">
    <property type="taxonomic scope" value="Bacteria"/>
</dbReference>
<dbReference type="HOGENOM" id="CLU_169643_1_2_7"/>
<dbReference type="Proteomes" id="UP000001136">
    <property type="component" value="Chromosome"/>
</dbReference>
<dbReference type="GO" id="GO:0022625">
    <property type="term" value="C:cytosolic large ribosomal subunit"/>
    <property type="evidence" value="ECO:0007669"/>
    <property type="project" value="TreeGrafter"/>
</dbReference>
<dbReference type="GO" id="GO:0003735">
    <property type="term" value="F:structural constituent of ribosome"/>
    <property type="evidence" value="ECO:0007669"/>
    <property type="project" value="InterPro"/>
</dbReference>
<dbReference type="GO" id="GO:0006412">
    <property type="term" value="P:translation"/>
    <property type="evidence" value="ECO:0007669"/>
    <property type="project" value="UniProtKB-UniRule"/>
</dbReference>
<dbReference type="FunFam" id="4.10.410.60:FF:000001">
    <property type="entry name" value="50S ribosomal protein L35"/>
    <property type="match status" value="1"/>
</dbReference>
<dbReference type="Gene3D" id="4.10.410.60">
    <property type="match status" value="1"/>
</dbReference>
<dbReference type="HAMAP" id="MF_00514">
    <property type="entry name" value="Ribosomal_bL35"/>
    <property type="match status" value="1"/>
</dbReference>
<dbReference type="InterPro" id="IPR001706">
    <property type="entry name" value="Ribosomal_bL35"/>
</dbReference>
<dbReference type="InterPro" id="IPR021137">
    <property type="entry name" value="Ribosomal_bL35-like"/>
</dbReference>
<dbReference type="InterPro" id="IPR018265">
    <property type="entry name" value="Ribosomal_bL35_CS"/>
</dbReference>
<dbReference type="InterPro" id="IPR037229">
    <property type="entry name" value="Ribosomal_bL35_sf"/>
</dbReference>
<dbReference type="NCBIfam" id="TIGR00001">
    <property type="entry name" value="rpmI_bact"/>
    <property type="match status" value="1"/>
</dbReference>
<dbReference type="PANTHER" id="PTHR33343">
    <property type="entry name" value="54S RIBOSOMAL PROTEIN BL35M"/>
    <property type="match status" value="1"/>
</dbReference>
<dbReference type="PANTHER" id="PTHR33343:SF1">
    <property type="entry name" value="LARGE RIBOSOMAL SUBUNIT PROTEIN BL35M"/>
    <property type="match status" value="1"/>
</dbReference>
<dbReference type="Pfam" id="PF01632">
    <property type="entry name" value="Ribosomal_L35p"/>
    <property type="match status" value="1"/>
</dbReference>
<dbReference type="PRINTS" id="PR00064">
    <property type="entry name" value="RIBOSOMALL35"/>
</dbReference>
<dbReference type="SUPFAM" id="SSF143034">
    <property type="entry name" value="L35p-like"/>
    <property type="match status" value="1"/>
</dbReference>
<dbReference type="PROSITE" id="PS00936">
    <property type="entry name" value="RIBOSOMAL_L35"/>
    <property type="match status" value="1"/>
</dbReference>
<keyword id="KW-1185">Reference proteome</keyword>
<keyword id="KW-0687">Ribonucleoprotein</keyword>
<keyword id="KW-0689">Ribosomal protein</keyword>
<sequence>MPKMKSVKGAVKRFKVKKNGTIKRGSAFRSHILTKMSQKRKRNLRGPKTVHSTNVAGILSTLCKA</sequence>
<feature type="chain" id="PRO_1000060888" description="Large ribosomal subunit protein bL35">
    <location>
        <begin position="1"/>
        <end position="65"/>
    </location>
</feature>
<evidence type="ECO:0000255" key="1">
    <source>
        <dbReference type="HAMAP-Rule" id="MF_00514"/>
    </source>
</evidence>
<evidence type="ECO:0000305" key="2"/>
<accession>A8EQY4</accession>
<reference key="1">
    <citation type="journal article" date="2007" name="PLoS ONE">
        <title>The complete genome sequence and analysis of the Epsilonproteobacterium Arcobacter butzleri.</title>
        <authorList>
            <person name="Miller W.G."/>
            <person name="Parker C.T."/>
            <person name="Rubenfield M."/>
            <person name="Mendz G.L."/>
            <person name="Woesten M.M.S.M."/>
            <person name="Ussery D.W."/>
            <person name="Stolz J.F."/>
            <person name="Binnewies T.T."/>
            <person name="Hallin P.F."/>
            <person name="Wang G."/>
            <person name="Malek J.A."/>
            <person name="Rogosin A."/>
            <person name="Stanker L.H."/>
            <person name="Mandrell R.E."/>
        </authorList>
    </citation>
    <scope>NUCLEOTIDE SEQUENCE [LARGE SCALE GENOMIC DNA]</scope>
    <source>
        <strain>RM4018</strain>
    </source>
</reference>
<gene>
    <name evidence="1" type="primary">rpmI</name>
    <name type="ordered locus">Abu_0073</name>
</gene>
<organism>
    <name type="scientific">Aliarcobacter butzleri (strain RM4018)</name>
    <name type="common">Arcobacter butzleri</name>
    <dbReference type="NCBI Taxonomy" id="367737"/>
    <lineage>
        <taxon>Bacteria</taxon>
        <taxon>Pseudomonadati</taxon>
        <taxon>Campylobacterota</taxon>
        <taxon>Epsilonproteobacteria</taxon>
        <taxon>Campylobacterales</taxon>
        <taxon>Arcobacteraceae</taxon>
        <taxon>Aliarcobacter</taxon>
    </lineage>
</organism>